<organism>
    <name type="scientific">Caenorhabditis elegans</name>
    <dbReference type="NCBI Taxonomy" id="6239"/>
    <lineage>
        <taxon>Eukaryota</taxon>
        <taxon>Metazoa</taxon>
        <taxon>Ecdysozoa</taxon>
        <taxon>Nematoda</taxon>
        <taxon>Chromadorea</taxon>
        <taxon>Rhabditida</taxon>
        <taxon>Rhabditina</taxon>
        <taxon>Rhabditomorpha</taxon>
        <taxon>Rhabditoidea</taxon>
        <taxon>Rhabditidae</taxon>
        <taxon>Peloderinae</taxon>
        <taxon>Caenorhabditis</taxon>
    </lineage>
</organism>
<feature type="chain" id="PRO_0000065097" description="Putative 1-acyl-sn-glycerol-3-phosphate acyltransferase acl-12">
    <location>
        <begin position="1"/>
        <end position="391"/>
    </location>
</feature>
<feature type="transmembrane region" description="Helical" evidence="2">
    <location>
        <begin position="47"/>
        <end position="67"/>
    </location>
</feature>
<feature type="transmembrane region" description="Helical" evidence="2">
    <location>
        <begin position="84"/>
        <end position="104"/>
    </location>
</feature>
<feature type="short sequence motif" description="HXXXXD motif">
    <location>
        <begin position="124"/>
        <end position="129"/>
    </location>
</feature>
<comment type="function">
    <text evidence="1">Converts lysophosphatidic acid (LPA) into phosphatidic acid by incorporating an acyl moiety at the sn-2 position of the glycerol backbone.</text>
</comment>
<comment type="catalytic activity">
    <reaction>
        <text>a 1-acyl-sn-glycero-3-phosphate + an acyl-CoA = a 1,2-diacyl-sn-glycero-3-phosphate + CoA</text>
        <dbReference type="Rhea" id="RHEA:19709"/>
        <dbReference type="ChEBI" id="CHEBI:57287"/>
        <dbReference type="ChEBI" id="CHEBI:57970"/>
        <dbReference type="ChEBI" id="CHEBI:58342"/>
        <dbReference type="ChEBI" id="CHEBI:58608"/>
        <dbReference type="EC" id="2.3.1.51"/>
    </reaction>
</comment>
<comment type="pathway">
    <text>Phospholipid metabolism; CDP-diacylglycerol biosynthesis; CDP-diacylglycerol from sn-glycerol 3-phosphate: step 2/3.</text>
</comment>
<comment type="subcellular location">
    <subcellularLocation>
        <location evidence="3">Membrane</location>
        <topology evidence="3">Multi-pass membrane protein</topology>
    </subcellularLocation>
</comment>
<comment type="domain">
    <text evidence="1">The HXXXXD motif is essential for acyltransferase activity and may constitute the binding site for the phosphate moiety of the glycerol-3-phosphate.</text>
</comment>
<comment type="similarity">
    <text evidence="3">Belongs to the 1-acyl-sn-glycerol-3-phosphate acyltransferase family.</text>
</comment>
<protein>
    <recommendedName>
        <fullName>Putative 1-acyl-sn-glycerol-3-phosphate acyltransferase acl-12</fullName>
        <shortName>1-AGP acyltransferase</shortName>
        <shortName>1-AGPAT</shortName>
        <ecNumber>2.3.1.51</ecNumber>
    </recommendedName>
    <alternativeName>
        <fullName>Lysophosphatidic acid acyltransferase</fullName>
        <shortName>LPAAT</shortName>
    </alternativeName>
</protein>
<proteinExistence type="inferred from homology"/>
<reference key="1">
    <citation type="journal article" date="1998" name="Science">
        <title>Genome sequence of the nematode C. elegans: a platform for investigating biology.</title>
        <authorList>
            <consortium name="The C. elegans sequencing consortium"/>
        </authorList>
    </citation>
    <scope>NUCLEOTIDE SEQUENCE [LARGE SCALE GENOMIC DNA]</scope>
    <source>
        <strain>Bristol N2</strain>
    </source>
</reference>
<accession>Q11087</accession>
<gene>
    <name type="primary">acl-12</name>
    <name type="ORF">C01C10.3</name>
</gene>
<evidence type="ECO:0000250" key="1"/>
<evidence type="ECO:0000255" key="2"/>
<evidence type="ECO:0000305" key="3"/>
<dbReference type="EC" id="2.3.1.51"/>
<dbReference type="EMBL" id="FO080255">
    <property type="protein sequence ID" value="CCD62384.1"/>
    <property type="molecule type" value="Genomic_DNA"/>
</dbReference>
<dbReference type="PIR" id="T15366">
    <property type="entry name" value="T15366"/>
</dbReference>
<dbReference type="RefSeq" id="NP_509260.1">
    <property type="nucleotide sequence ID" value="NM_076859.7"/>
</dbReference>
<dbReference type="FunCoup" id="Q11087">
    <property type="interactions" value="69"/>
</dbReference>
<dbReference type="STRING" id="6239.C01C10.3.1"/>
<dbReference type="PaxDb" id="6239-C01C10.3"/>
<dbReference type="PeptideAtlas" id="Q11087"/>
<dbReference type="EnsemblMetazoa" id="C01C10.3.1">
    <property type="protein sequence ID" value="C01C10.3.1"/>
    <property type="gene ID" value="WBGene00015295"/>
</dbReference>
<dbReference type="GeneID" id="181001"/>
<dbReference type="KEGG" id="cel:CELE_C01C10.3"/>
<dbReference type="UCSC" id="C01C10.3">
    <property type="organism name" value="c. elegans"/>
</dbReference>
<dbReference type="AGR" id="WB:WBGene00015295"/>
<dbReference type="CTD" id="181001"/>
<dbReference type="WormBase" id="C01C10.3">
    <property type="protein sequence ID" value="CE02449"/>
    <property type="gene ID" value="WBGene00015295"/>
    <property type="gene designation" value="acl-12"/>
</dbReference>
<dbReference type="eggNOG" id="KOG1505">
    <property type="taxonomic scope" value="Eukaryota"/>
</dbReference>
<dbReference type="GeneTree" id="ENSGT00950000182836"/>
<dbReference type="HOGENOM" id="CLU_046804_0_0_1"/>
<dbReference type="InParanoid" id="Q11087"/>
<dbReference type="OMA" id="TPLGVMW"/>
<dbReference type="OrthoDB" id="5920068at2759"/>
<dbReference type="PhylomeDB" id="Q11087"/>
<dbReference type="UniPathway" id="UPA00557">
    <property type="reaction ID" value="UER00613"/>
</dbReference>
<dbReference type="PRO" id="PR:Q11087"/>
<dbReference type="Proteomes" id="UP000001940">
    <property type="component" value="Chromosome X"/>
</dbReference>
<dbReference type="Bgee" id="WBGene00015295">
    <property type="expression patterns" value="Expressed in material anatomical entity and 5 other cell types or tissues"/>
</dbReference>
<dbReference type="GO" id="GO:0012505">
    <property type="term" value="C:endomembrane system"/>
    <property type="evidence" value="ECO:0000318"/>
    <property type="project" value="GO_Central"/>
</dbReference>
<dbReference type="GO" id="GO:0005783">
    <property type="term" value="C:endoplasmic reticulum"/>
    <property type="evidence" value="ECO:0000318"/>
    <property type="project" value="GO_Central"/>
</dbReference>
<dbReference type="GO" id="GO:0016020">
    <property type="term" value="C:membrane"/>
    <property type="evidence" value="ECO:0007669"/>
    <property type="project" value="UniProtKB-SubCell"/>
</dbReference>
<dbReference type="GO" id="GO:0003841">
    <property type="term" value="F:1-acylglycerol-3-phosphate O-acyltransferase activity"/>
    <property type="evidence" value="ECO:0007669"/>
    <property type="project" value="UniProtKB-EC"/>
</dbReference>
<dbReference type="GO" id="GO:0016746">
    <property type="term" value="F:acyltransferase activity"/>
    <property type="evidence" value="ECO:0000318"/>
    <property type="project" value="GO_Central"/>
</dbReference>
<dbReference type="GO" id="GO:0016024">
    <property type="term" value="P:CDP-diacylglycerol biosynthetic process"/>
    <property type="evidence" value="ECO:0007669"/>
    <property type="project" value="UniProtKB-UniPathway"/>
</dbReference>
<dbReference type="GO" id="GO:0036498">
    <property type="term" value="P:IRE1-mediated unfolded protein response"/>
    <property type="evidence" value="ECO:0007007"/>
    <property type="project" value="WormBase"/>
</dbReference>
<dbReference type="GO" id="GO:0036499">
    <property type="term" value="P:PERK-mediated unfolded protein response"/>
    <property type="evidence" value="ECO:0007007"/>
    <property type="project" value="WormBase"/>
</dbReference>
<dbReference type="GO" id="GO:0036149">
    <property type="term" value="P:phosphatidylinositol acyl-chain remodeling"/>
    <property type="evidence" value="ECO:0000318"/>
    <property type="project" value="GO_Central"/>
</dbReference>
<dbReference type="InterPro" id="IPR032098">
    <property type="entry name" value="Acyltransf_C"/>
</dbReference>
<dbReference type="InterPro" id="IPR002123">
    <property type="entry name" value="Plipid/glycerol_acylTrfase"/>
</dbReference>
<dbReference type="PANTHER" id="PTHR10983:SF14">
    <property type="entry name" value="1-ACYL-SN-GLYCEROL-3-PHOSPHATE ACYLTRANSFERASE ACL-12-RELATED"/>
    <property type="match status" value="1"/>
</dbReference>
<dbReference type="PANTHER" id="PTHR10983">
    <property type="entry name" value="1-ACYLGLYCEROL-3-PHOSPHATE ACYLTRANSFERASE-RELATED"/>
    <property type="match status" value="1"/>
</dbReference>
<dbReference type="Pfam" id="PF16076">
    <property type="entry name" value="Acyltransf_C"/>
    <property type="match status" value="1"/>
</dbReference>
<dbReference type="SMART" id="SM00563">
    <property type="entry name" value="PlsC"/>
    <property type="match status" value="1"/>
</dbReference>
<dbReference type="SUPFAM" id="SSF69593">
    <property type="entry name" value="Glycerol-3-phosphate (1)-acyltransferase"/>
    <property type="match status" value="1"/>
</dbReference>
<name>PLC12_CAEEL</name>
<keyword id="KW-0012">Acyltransferase</keyword>
<keyword id="KW-0444">Lipid biosynthesis</keyword>
<keyword id="KW-0443">Lipid metabolism</keyword>
<keyword id="KW-0472">Membrane</keyword>
<keyword id="KW-0594">Phospholipid biosynthesis</keyword>
<keyword id="KW-1208">Phospholipid metabolism</keyword>
<keyword id="KW-1185">Reference proteome</keyword>
<keyword id="KW-0808">Transferase</keyword>
<keyword id="KW-0812">Transmembrane</keyword>
<keyword id="KW-1133">Transmembrane helix</keyword>
<sequence length="391" mass="44718">MLKSGLMDTDDQKVGVRVANIDMSERTDNVHLIEIRRIISLVGAAYFFFMTAWVVPVACVITVSLLFPLMLFSTPLFNYLEHKLCAMVNAHWNAVSVFVGATVTEYGTNLAGYAEEKCLLLANHLGLLDHFVLMQSLNGKGSIRSRWMWVIYNIWKYTPLGVMWTSHGNFFVNGGVSKRDSVLSSFRDHLKNSFYKYDYGWVIMYPEGSRLYLVKNSGRTFAEKNGLKPLDNCVYPRTGAAHAVLDVLGPTDDSLSMSKCGKGEPIKYIIDATIGYRKGAVPDICDVMMGDWESVEASQFAVHYDVIPVKPEWSDENLLKEFLYERYIIKDKLLAEFYKTGHFPGDKTKVIPNNYEMMFAQVFWGCLYYAHYVYWLRPLIVHSWTSFLSIF</sequence>